<organism>
    <name type="scientific">Bordetella bronchiseptica (strain ATCC BAA-588 / NCTC 13252 / RB50)</name>
    <name type="common">Alcaligenes bronchisepticus</name>
    <dbReference type="NCBI Taxonomy" id="257310"/>
    <lineage>
        <taxon>Bacteria</taxon>
        <taxon>Pseudomonadati</taxon>
        <taxon>Pseudomonadota</taxon>
        <taxon>Betaproteobacteria</taxon>
        <taxon>Burkholderiales</taxon>
        <taxon>Alcaligenaceae</taxon>
        <taxon>Bordetella</taxon>
    </lineage>
</organism>
<gene>
    <name evidence="1" type="primary">pdxH</name>
    <name type="ordered locus">BB4042</name>
</gene>
<accession>Q7WG77</accession>
<dbReference type="EC" id="1.4.3.5" evidence="1"/>
<dbReference type="EMBL" id="BX640449">
    <property type="protein sequence ID" value="CAE34405.1"/>
    <property type="molecule type" value="Genomic_DNA"/>
</dbReference>
<dbReference type="RefSeq" id="WP_003814302.1">
    <property type="nucleotide sequence ID" value="NC_002927.3"/>
</dbReference>
<dbReference type="SMR" id="Q7WG77"/>
<dbReference type="GeneID" id="93205395"/>
<dbReference type="KEGG" id="bbr:BB4042"/>
<dbReference type="eggNOG" id="COG0259">
    <property type="taxonomic scope" value="Bacteria"/>
</dbReference>
<dbReference type="HOGENOM" id="CLU_032263_2_2_4"/>
<dbReference type="UniPathway" id="UPA01068">
    <property type="reaction ID" value="UER00304"/>
</dbReference>
<dbReference type="UniPathway" id="UPA01068">
    <property type="reaction ID" value="UER00305"/>
</dbReference>
<dbReference type="Proteomes" id="UP000001027">
    <property type="component" value="Chromosome"/>
</dbReference>
<dbReference type="GO" id="GO:0010181">
    <property type="term" value="F:FMN binding"/>
    <property type="evidence" value="ECO:0007669"/>
    <property type="project" value="UniProtKB-UniRule"/>
</dbReference>
<dbReference type="GO" id="GO:0004733">
    <property type="term" value="F:pyridoxamine phosphate oxidase activity"/>
    <property type="evidence" value="ECO:0007669"/>
    <property type="project" value="UniProtKB-UniRule"/>
</dbReference>
<dbReference type="GO" id="GO:0008615">
    <property type="term" value="P:pyridoxine biosynthetic process"/>
    <property type="evidence" value="ECO:0007669"/>
    <property type="project" value="UniProtKB-KW"/>
</dbReference>
<dbReference type="FunFam" id="2.30.110.10:FF:000005">
    <property type="entry name" value="NAD(P)H-hydrate epimerase"/>
    <property type="match status" value="1"/>
</dbReference>
<dbReference type="Gene3D" id="2.30.110.10">
    <property type="entry name" value="Electron Transport, Fmn-binding Protein, Chain A"/>
    <property type="match status" value="1"/>
</dbReference>
<dbReference type="HAMAP" id="MF_01629">
    <property type="entry name" value="PdxH"/>
    <property type="match status" value="1"/>
</dbReference>
<dbReference type="InterPro" id="IPR000659">
    <property type="entry name" value="Pyridox_Oxase"/>
</dbReference>
<dbReference type="InterPro" id="IPR019740">
    <property type="entry name" value="Pyridox_Oxase_CS"/>
</dbReference>
<dbReference type="InterPro" id="IPR011576">
    <property type="entry name" value="Pyridox_Oxase_N"/>
</dbReference>
<dbReference type="InterPro" id="IPR019576">
    <property type="entry name" value="Pyridoxamine_oxidase_dimer_C"/>
</dbReference>
<dbReference type="InterPro" id="IPR012349">
    <property type="entry name" value="Split_barrel_FMN-bd"/>
</dbReference>
<dbReference type="NCBIfam" id="TIGR00558">
    <property type="entry name" value="pdxH"/>
    <property type="match status" value="1"/>
</dbReference>
<dbReference type="NCBIfam" id="NF004231">
    <property type="entry name" value="PRK05679.1"/>
    <property type="match status" value="1"/>
</dbReference>
<dbReference type="PANTHER" id="PTHR10851:SF0">
    <property type="entry name" value="PYRIDOXINE-5'-PHOSPHATE OXIDASE"/>
    <property type="match status" value="1"/>
</dbReference>
<dbReference type="PANTHER" id="PTHR10851">
    <property type="entry name" value="PYRIDOXINE-5-PHOSPHATE OXIDASE"/>
    <property type="match status" value="1"/>
</dbReference>
<dbReference type="Pfam" id="PF10590">
    <property type="entry name" value="PNP_phzG_C"/>
    <property type="match status" value="1"/>
</dbReference>
<dbReference type="Pfam" id="PF01243">
    <property type="entry name" value="PNPOx_N"/>
    <property type="match status" value="1"/>
</dbReference>
<dbReference type="PIRSF" id="PIRSF000190">
    <property type="entry name" value="Pyd_amn-ph_oxd"/>
    <property type="match status" value="1"/>
</dbReference>
<dbReference type="SUPFAM" id="SSF50475">
    <property type="entry name" value="FMN-binding split barrel"/>
    <property type="match status" value="1"/>
</dbReference>
<dbReference type="PROSITE" id="PS01064">
    <property type="entry name" value="PYRIDOX_OXIDASE"/>
    <property type="match status" value="1"/>
</dbReference>
<keyword id="KW-0285">Flavoprotein</keyword>
<keyword id="KW-0288">FMN</keyword>
<keyword id="KW-0560">Oxidoreductase</keyword>
<keyword id="KW-0664">Pyridoxine biosynthesis</keyword>
<comment type="function">
    <text evidence="1">Catalyzes the oxidation of either pyridoxine 5'-phosphate (PNP) or pyridoxamine 5'-phosphate (PMP) into pyridoxal 5'-phosphate (PLP).</text>
</comment>
<comment type="catalytic activity">
    <reaction evidence="1">
        <text>pyridoxamine 5'-phosphate + O2 + H2O = pyridoxal 5'-phosphate + H2O2 + NH4(+)</text>
        <dbReference type="Rhea" id="RHEA:15817"/>
        <dbReference type="ChEBI" id="CHEBI:15377"/>
        <dbReference type="ChEBI" id="CHEBI:15379"/>
        <dbReference type="ChEBI" id="CHEBI:16240"/>
        <dbReference type="ChEBI" id="CHEBI:28938"/>
        <dbReference type="ChEBI" id="CHEBI:58451"/>
        <dbReference type="ChEBI" id="CHEBI:597326"/>
        <dbReference type="EC" id="1.4.3.5"/>
    </reaction>
</comment>
<comment type="catalytic activity">
    <reaction evidence="1">
        <text>pyridoxine 5'-phosphate + O2 = pyridoxal 5'-phosphate + H2O2</text>
        <dbReference type="Rhea" id="RHEA:15149"/>
        <dbReference type="ChEBI" id="CHEBI:15379"/>
        <dbReference type="ChEBI" id="CHEBI:16240"/>
        <dbReference type="ChEBI" id="CHEBI:58589"/>
        <dbReference type="ChEBI" id="CHEBI:597326"/>
        <dbReference type="EC" id="1.4.3.5"/>
    </reaction>
</comment>
<comment type="cofactor">
    <cofactor evidence="1">
        <name>FMN</name>
        <dbReference type="ChEBI" id="CHEBI:58210"/>
    </cofactor>
    <text evidence="1">Binds 1 FMN per subunit.</text>
</comment>
<comment type="pathway">
    <text evidence="1">Cofactor metabolism; pyridoxal 5'-phosphate salvage; pyridoxal 5'-phosphate from pyridoxamine 5'-phosphate: step 1/1.</text>
</comment>
<comment type="pathway">
    <text evidence="1">Cofactor metabolism; pyridoxal 5'-phosphate salvage; pyridoxal 5'-phosphate from pyridoxine 5'-phosphate: step 1/1.</text>
</comment>
<comment type="subunit">
    <text evidence="1">Homodimer.</text>
</comment>
<comment type="similarity">
    <text evidence="1">Belongs to the pyridoxamine 5'-phosphate oxidase family.</text>
</comment>
<sequence length="210" mass="24281">MSVSDLRQSYEKGVLVEEQAAASPFQQFARWFDEAVAARVPEPNAMTLATVNAEGQPSARIVLIKGYDDAGFVFFTNYESRKGLDLDANPRASLLFFWQPLERQVRIEGVIEKVSAAESDEYFHSRPLGSRLGAWASRQSQPITRDELEAREREFRDRYGEHPPRPPHWGGYRLKPNRFEFWQGRPSRLHDRLRYEPDGKQGWTIDRLSP</sequence>
<evidence type="ECO:0000255" key="1">
    <source>
        <dbReference type="HAMAP-Rule" id="MF_01629"/>
    </source>
</evidence>
<protein>
    <recommendedName>
        <fullName evidence="1">Pyridoxine/pyridoxamine 5'-phosphate oxidase</fullName>
        <ecNumber evidence="1">1.4.3.5</ecNumber>
    </recommendedName>
    <alternativeName>
        <fullName evidence="1">PNP/PMP oxidase</fullName>
        <shortName evidence="1">PNPOx</shortName>
    </alternativeName>
    <alternativeName>
        <fullName evidence="1">Pyridoxal 5'-phosphate synthase</fullName>
    </alternativeName>
</protein>
<proteinExistence type="inferred from homology"/>
<feature type="chain" id="PRO_0000167689" description="Pyridoxine/pyridoxamine 5'-phosphate oxidase">
    <location>
        <begin position="1"/>
        <end position="210"/>
    </location>
</feature>
<feature type="binding site" evidence="1">
    <location>
        <begin position="7"/>
        <end position="10"/>
    </location>
    <ligand>
        <name>substrate</name>
    </ligand>
</feature>
<feature type="binding site" evidence="1">
    <location>
        <begin position="60"/>
        <end position="65"/>
    </location>
    <ligand>
        <name>FMN</name>
        <dbReference type="ChEBI" id="CHEBI:58210"/>
    </ligand>
</feature>
<feature type="binding site" evidence="1">
    <location>
        <position position="65"/>
    </location>
    <ligand>
        <name>substrate</name>
    </ligand>
</feature>
<feature type="binding site" evidence="1">
    <location>
        <begin position="75"/>
        <end position="76"/>
    </location>
    <ligand>
        <name>FMN</name>
        <dbReference type="ChEBI" id="CHEBI:58210"/>
    </ligand>
</feature>
<feature type="binding site" evidence="1">
    <location>
        <position position="81"/>
    </location>
    <ligand>
        <name>FMN</name>
        <dbReference type="ChEBI" id="CHEBI:58210"/>
    </ligand>
</feature>
<feature type="binding site" evidence="1">
    <location>
        <position position="82"/>
    </location>
    <ligand>
        <name>FMN</name>
        <dbReference type="ChEBI" id="CHEBI:58210"/>
    </ligand>
</feature>
<feature type="binding site" evidence="1">
    <location>
        <position position="104"/>
    </location>
    <ligand>
        <name>FMN</name>
        <dbReference type="ChEBI" id="CHEBI:58210"/>
    </ligand>
</feature>
<feature type="binding site" evidence="1">
    <location>
        <position position="122"/>
    </location>
    <ligand>
        <name>substrate</name>
    </ligand>
</feature>
<feature type="binding site" evidence="1">
    <location>
        <position position="126"/>
    </location>
    <ligand>
        <name>substrate</name>
    </ligand>
</feature>
<feature type="binding site" evidence="1">
    <location>
        <position position="130"/>
    </location>
    <ligand>
        <name>substrate</name>
    </ligand>
</feature>
<feature type="binding site" evidence="1">
    <location>
        <begin position="139"/>
        <end position="140"/>
    </location>
    <ligand>
        <name>FMN</name>
        <dbReference type="ChEBI" id="CHEBI:58210"/>
    </ligand>
</feature>
<feature type="binding site" evidence="1">
    <location>
        <position position="182"/>
    </location>
    <ligand>
        <name>FMN</name>
        <dbReference type="ChEBI" id="CHEBI:58210"/>
    </ligand>
</feature>
<feature type="binding site" evidence="1">
    <location>
        <begin position="188"/>
        <end position="190"/>
    </location>
    <ligand>
        <name>substrate</name>
    </ligand>
</feature>
<feature type="binding site" evidence="1">
    <location>
        <position position="192"/>
    </location>
    <ligand>
        <name>FMN</name>
        <dbReference type="ChEBI" id="CHEBI:58210"/>
    </ligand>
</feature>
<name>PDXH_BORBR</name>
<reference key="1">
    <citation type="journal article" date="2003" name="Nat. Genet.">
        <title>Comparative analysis of the genome sequences of Bordetella pertussis, Bordetella parapertussis and Bordetella bronchiseptica.</title>
        <authorList>
            <person name="Parkhill J."/>
            <person name="Sebaihia M."/>
            <person name="Preston A."/>
            <person name="Murphy L.D."/>
            <person name="Thomson N.R."/>
            <person name="Harris D.E."/>
            <person name="Holden M.T.G."/>
            <person name="Churcher C.M."/>
            <person name="Bentley S.D."/>
            <person name="Mungall K.L."/>
            <person name="Cerdeno-Tarraga A.-M."/>
            <person name="Temple L."/>
            <person name="James K.D."/>
            <person name="Harris B."/>
            <person name="Quail M.A."/>
            <person name="Achtman M."/>
            <person name="Atkin R."/>
            <person name="Baker S."/>
            <person name="Basham D."/>
            <person name="Bason N."/>
            <person name="Cherevach I."/>
            <person name="Chillingworth T."/>
            <person name="Collins M."/>
            <person name="Cronin A."/>
            <person name="Davis P."/>
            <person name="Doggett J."/>
            <person name="Feltwell T."/>
            <person name="Goble A."/>
            <person name="Hamlin N."/>
            <person name="Hauser H."/>
            <person name="Holroyd S."/>
            <person name="Jagels K."/>
            <person name="Leather S."/>
            <person name="Moule S."/>
            <person name="Norberczak H."/>
            <person name="O'Neil S."/>
            <person name="Ormond D."/>
            <person name="Price C."/>
            <person name="Rabbinowitsch E."/>
            <person name="Rutter S."/>
            <person name="Sanders M."/>
            <person name="Saunders D."/>
            <person name="Seeger K."/>
            <person name="Sharp S."/>
            <person name="Simmonds M."/>
            <person name="Skelton J."/>
            <person name="Squares R."/>
            <person name="Squares S."/>
            <person name="Stevens K."/>
            <person name="Unwin L."/>
            <person name="Whitehead S."/>
            <person name="Barrell B.G."/>
            <person name="Maskell D.J."/>
        </authorList>
    </citation>
    <scope>NUCLEOTIDE SEQUENCE [LARGE SCALE GENOMIC DNA]</scope>
    <source>
        <strain>ATCC BAA-588 / NCTC 13252 / RB50</strain>
    </source>
</reference>